<dbReference type="EC" id="6.1.1.6" evidence="1"/>
<dbReference type="EMBL" id="AE017244">
    <property type="protein sequence ID" value="AAZ53581.2"/>
    <property type="molecule type" value="Genomic_DNA"/>
</dbReference>
<dbReference type="SMR" id="Q4A8F8"/>
<dbReference type="KEGG" id="mhp:MHP7448_0207"/>
<dbReference type="HOGENOM" id="CLU_008255_6_0_14"/>
<dbReference type="Proteomes" id="UP000000553">
    <property type="component" value="Chromosome"/>
</dbReference>
<dbReference type="GO" id="GO:0005829">
    <property type="term" value="C:cytosol"/>
    <property type="evidence" value="ECO:0007669"/>
    <property type="project" value="TreeGrafter"/>
</dbReference>
<dbReference type="GO" id="GO:0005524">
    <property type="term" value="F:ATP binding"/>
    <property type="evidence" value="ECO:0007669"/>
    <property type="project" value="UniProtKB-UniRule"/>
</dbReference>
<dbReference type="GO" id="GO:0004824">
    <property type="term" value="F:lysine-tRNA ligase activity"/>
    <property type="evidence" value="ECO:0007669"/>
    <property type="project" value="UniProtKB-UniRule"/>
</dbReference>
<dbReference type="GO" id="GO:0000287">
    <property type="term" value="F:magnesium ion binding"/>
    <property type="evidence" value="ECO:0007669"/>
    <property type="project" value="UniProtKB-UniRule"/>
</dbReference>
<dbReference type="GO" id="GO:0000049">
    <property type="term" value="F:tRNA binding"/>
    <property type="evidence" value="ECO:0007669"/>
    <property type="project" value="TreeGrafter"/>
</dbReference>
<dbReference type="GO" id="GO:0006430">
    <property type="term" value="P:lysyl-tRNA aminoacylation"/>
    <property type="evidence" value="ECO:0007669"/>
    <property type="project" value="UniProtKB-UniRule"/>
</dbReference>
<dbReference type="CDD" id="cd00775">
    <property type="entry name" value="LysRS_core"/>
    <property type="match status" value="1"/>
</dbReference>
<dbReference type="CDD" id="cd04322">
    <property type="entry name" value="LysRS_N"/>
    <property type="match status" value="1"/>
</dbReference>
<dbReference type="Gene3D" id="3.30.930.10">
    <property type="entry name" value="Bira Bifunctional Protein, Domain 2"/>
    <property type="match status" value="1"/>
</dbReference>
<dbReference type="Gene3D" id="2.40.50.140">
    <property type="entry name" value="Nucleic acid-binding proteins"/>
    <property type="match status" value="1"/>
</dbReference>
<dbReference type="HAMAP" id="MF_00252">
    <property type="entry name" value="Lys_tRNA_synth_class2"/>
    <property type="match status" value="1"/>
</dbReference>
<dbReference type="InterPro" id="IPR004364">
    <property type="entry name" value="Aa-tRNA-synt_II"/>
</dbReference>
<dbReference type="InterPro" id="IPR006195">
    <property type="entry name" value="aa-tRNA-synth_II"/>
</dbReference>
<dbReference type="InterPro" id="IPR045864">
    <property type="entry name" value="aa-tRNA-synth_II/BPL/LPL"/>
</dbReference>
<dbReference type="InterPro" id="IPR002313">
    <property type="entry name" value="Lys-tRNA-ligase_II"/>
</dbReference>
<dbReference type="InterPro" id="IPR044136">
    <property type="entry name" value="Lys-tRNA-ligase_II_N"/>
</dbReference>
<dbReference type="InterPro" id="IPR018149">
    <property type="entry name" value="Lys-tRNA-synth_II_C"/>
</dbReference>
<dbReference type="InterPro" id="IPR012340">
    <property type="entry name" value="NA-bd_OB-fold"/>
</dbReference>
<dbReference type="InterPro" id="IPR004365">
    <property type="entry name" value="NA-bd_OB_tRNA"/>
</dbReference>
<dbReference type="NCBIfam" id="TIGR00499">
    <property type="entry name" value="lysS_bact"/>
    <property type="match status" value="1"/>
</dbReference>
<dbReference type="NCBIfam" id="NF001756">
    <property type="entry name" value="PRK00484.1"/>
    <property type="match status" value="1"/>
</dbReference>
<dbReference type="PANTHER" id="PTHR42918:SF15">
    <property type="entry name" value="LYSINE--TRNA LIGASE, CHLOROPLASTIC_MITOCHONDRIAL"/>
    <property type="match status" value="1"/>
</dbReference>
<dbReference type="PANTHER" id="PTHR42918">
    <property type="entry name" value="LYSYL-TRNA SYNTHETASE"/>
    <property type="match status" value="1"/>
</dbReference>
<dbReference type="Pfam" id="PF00152">
    <property type="entry name" value="tRNA-synt_2"/>
    <property type="match status" value="1"/>
</dbReference>
<dbReference type="Pfam" id="PF01336">
    <property type="entry name" value="tRNA_anti-codon"/>
    <property type="match status" value="1"/>
</dbReference>
<dbReference type="PRINTS" id="PR00982">
    <property type="entry name" value="TRNASYNTHLYS"/>
</dbReference>
<dbReference type="SUPFAM" id="SSF55681">
    <property type="entry name" value="Class II aaRS and biotin synthetases"/>
    <property type="match status" value="1"/>
</dbReference>
<dbReference type="SUPFAM" id="SSF50249">
    <property type="entry name" value="Nucleic acid-binding proteins"/>
    <property type="match status" value="1"/>
</dbReference>
<dbReference type="PROSITE" id="PS50862">
    <property type="entry name" value="AA_TRNA_LIGASE_II"/>
    <property type="match status" value="1"/>
</dbReference>
<feature type="chain" id="PRO_1000012894" description="Lysine--tRNA ligase">
    <location>
        <begin position="1"/>
        <end position="491"/>
    </location>
</feature>
<feature type="binding site" evidence="1">
    <location>
        <position position="400"/>
    </location>
    <ligand>
        <name>Mg(2+)</name>
        <dbReference type="ChEBI" id="CHEBI:18420"/>
        <label>1</label>
    </ligand>
</feature>
<feature type="binding site" evidence="1">
    <location>
        <position position="407"/>
    </location>
    <ligand>
        <name>Mg(2+)</name>
        <dbReference type="ChEBI" id="CHEBI:18420"/>
        <label>1</label>
    </ligand>
</feature>
<feature type="binding site" evidence="1">
    <location>
        <position position="407"/>
    </location>
    <ligand>
        <name>Mg(2+)</name>
        <dbReference type="ChEBI" id="CHEBI:18420"/>
        <label>2</label>
    </ligand>
</feature>
<organism>
    <name type="scientific">Mesomycoplasma hyopneumoniae (strain 7448)</name>
    <name type="common">Mycoplasma hyopneumoniae</name>
    <dbReference type="NCBI Taxonomy" id="262722"/>
    <lineage>
        <taxon>Bacteria</taxon>
        <taxon>Bacillati</taxon>
        <taxon>Mycoplasmatota</taxon>
        <taxon>Mycoplasmoidales</taxon>
        <taxon>Metamycoplasmataceae</taxon>
        <taxon>Mesomycoplasma</taxon>
    </lineage>
</organism>
<keyword id="KW-0030">Aminoacyl-tRNA synthetase</keyword>
<keyword id="KW-0067">ATP-binding</keyword>
<keyword id="KW-0963">Cytoplasm</keyword>
<keyword id="KW-0436">Ligase</keyword>
<keyword id="KW-0460">Magnesium</keyword>
<keyword id="KW-0479">Metal-binding</keyword>
<keyword id="KW-0547">Nucleotide-binding</keyword>
<keyword id="KW-0648">Protein biosynthesis</keyword>
<evidence type="ECO:0000255" key="1">
    <source>
        <dbReference type="HAMAP-Rule" id="MF_00252"/>
    </source>
</evidence>
<reference key="1">
    <citation type="journal article" date="2005" name="J. Bacteriol.">
        <title>Swine and poultry pathogens: the complete genome sequences of two strains of Mycoplasma hyopneumoniae and a strain of Mycoplasma synoviae.</title>
        <authorList>
            <person name="Vasconcelos A.T.R."/>
            <person name="Ferreira H.B."/>
            <person name="Bizarro C.V."/>
            <person name="Bonatto S.L."/>
            <person name="Carvalho M.O."/>
            <person name="Pinto P.M."/>
            <person name="Almeida D.F."/>
            <person name="Almeida L.G.P."/>
            <person name="Almeida R."/>
            <person name="Alves-Junior L."/>
            <person name="Assuncao E.N."/>
            <person name="Azevedo V.A.C."/>
            <person name="Bogo M.R."/>
            <person name="Brigido M.M."/>
            <person name="Brocchi M."/>
            <person name="Burity H.A."/>
            <person name="Camargo A.A."/>
            <person name="Camargo S.S."/>
            <person name="Carepo M.S."/>
            <person name="Carraro D.M."/>
            <person name="de Mattos Cascardo J.C."/>
            <person name="Castro L.A."/>
            <person name="Cavalcanti G."/>
            <person name="Chemale G."/>
            <person name="Collevatti R.G."/>
            <person name="Cunha C.W."/>
            <person name="Dallagiovanna B."/>
            <person name="Dambros B.P."/>
            <person name="Dellagostin O.A."/>
            <person name="Falcao C."/>
            <person name="Fantinatti-Garboggini F."/>
            <person name="Felipe M.S.S."/>
            <person name="Fiorentin L."/>
            <person name="Franco G.R."/>
            <person name="Freitas N.S.A."/>
            <person name="Frias D."/>
            <person name="Grangeiro T.B."/>
            <person name="Grisard E.C."/>
            <person name="Guimaraes C.T."/>
            <person name="Hungria M."/>
            <person name="Jardim S.N."/>
            <person name="Krieger M.A."/>
            <person name="Laurino J.P."/>
            <person name="Lima L.F.A."/>
            <person name="Lopes M.I."/>
            <person name="Loreto E.L.S."/>
            <person name="Madeira H.M.F."/>
            <person name="Manfio G.P."/>
            <person name="Maranhao A.Q."/>
            <person name="Martinkovics C.T."/>
            <person name="Medeiros S.R.B."/>
            <person name="Moreira M.A.M."/>
            <person name="Neiva M."/>
            <person name="Ramalho-Neto C.E."/>
            <person name="Nicolas M.F."/>
            <person name="Oliveira S.C."/>
            <person name="Paixao R.F.C."/>
            <person name="Pedrosa F.O."/>
            <person name="Pena S.D.J."/>
            <person name="Pereira M."/>
            <person name="Pereira-Ferrari L."/>
            <person name="Piffer I."/>
            <person name="Pinto L.S."/>
            <person name="Potrich D.P."/>
            <person name="Salim A.C.M."/>
            <person name="Santos F.R."/>
            <person name="Schmitt R."/>
            <person name="Schneider M.P.C."/>
            <person name="Schrank A."/>
            <person name="Schrank I.S."/>
            <person name="Schuck A.F."/>
            <person name="Seuanez H.N."/>
            <person name="Silva D.W."/>
            <person name="Silva R."/>
            <person name="Silva S.C."/>
            <person name="Soares C.M.A."/>
            <person name="Souza K.R.L."/>
            <person name="Souza R.C."/>
            <person name="Staats C.C."/>
            <person name="Steffens M.B.R."/>
            <person name="Teixeira S.M.R."/>
            <person name="Urmenyi T.P."/>
            <person name="Vainstein M.H."/>
            <person name="Zuccherato L.W."/>
            <person name="Simpson A.J.G."/>
            <person name="Zaha A."/>
        </authorList>
    </citation>
    <scope>NUCLEOTIDE SEQUENCE [LARGE SCALE GENOMIC DNA]</scope>
    <source>
        <strain>7448</strain>
    </source>
</reference>
<accession>Q4A8F8</accession>
<name>SYK_MESH7</name>
<comment type="catalytic activity">
    <reaction evidence="1">
        <text>tRNA(Lys) + L-lysine + ATP = L-lysyl-tRNA(Lys) + AMP + diphosphate</text>
        <dbReference type="Rhea" id="RHEA:20792"/>
        <dbReference type="Rhea" id="RHEA-COMP:9696"/>
        <dbReference type="Rhea" id="RHEA-COMP:9697"/>
        <dbReference type="ChEBI" id="CHEBI:30616"/>
        <dbReference type="ChEBI" id="CHEBI:32551"/>
        <dbReference type="ChEBI" id="CHEBI:33019"/>
        <dbReference type="ChEBI" id="CHEBI:78442"/>
        <dbReference type="ChEBI" id="CHEBI:78529"/>
        <dbReference type="ChEBI" id="CHEBI:456215"/>
        <dbReference type="EC" id="6.1.1.6"/>
    </reaction>
</comment>
<comment type="cofactor">
    <cofactor evidence="1">
        <name>Mg(2+)</name>
        <dbReference type="ChEBI" id="CHEBI:18420"/>
    </cofactor>
    <text evidence="1">Binds 3 Mg(2+) ions per subunit.</text>
</comment>
<comment type="subunit">
    <text evidence="1">Homodimer.</text>
</comment>
<comment type="subcellular location">
    <subcellularLocation>
        <location evidence="1">Cytoplasm</location>
    </subcellularLocation>
</comment>
<comment type="similarity">
    <text evidence="1">Belongs to the class-II aminoacyl-tRNA synthetase family.</text>
</comment>
<proteinExistence type="inferred from homology"/>
<sequence length="491" mass="56929">MKIMSKLNDQQQFRRDKLKNLVKNGFNFPSSTFEHDNLVEINEKFSQKSKEFFLENQVKIAFAGRLIRQRGPFFIIFSQNLQIQAYISKKFQKKNEFIFANLDLGDIIEVSGYLFKTQTGQLSIKVNNFSLLTKSLHPLPDQYYGIENPDEKYRKRYLDLLVNSESAKTFRLRSKIISLIRTFFDSQGFLEVDTPVLHPVLGGASAKPFITYYNSLSQNFYLRIATELPLKKLLVAGFDRVYEIGKIFRNEGFDSTHNPEFTSIEFYQAYANLEKIMDQTENLFRFLFEKLNLDPANFDFSNKKINFLEKFARYDMIEITSKLMNFDLKSANFADLVEKAKKEGVKIEPFFKKGHLINKFFEKFVEPTLINPTFIIGHPIEISPLAKSNPNNPNFTLRAELFICGKEFANMFDELNDPIDQLSRFQAQIIEKNQGNQEASEIDNEFVQALEYGMPPAGGCGIGIDRLTMLLTKNESIREVILFPQLKPKKD</sequence>
<gene>
    <name evidence="1" type="primary">lysS</name>
    <name type="ordered locus">MHP7448_0207</name>
</gene>
<protein>
    <recommendedName>
        <fullName evidence="1">Lysine--tRNA ligase</fullName>
        <ecNumber evidence="1">6.1.1.6</ecNumber>
    </recommendedName>
    <alternativeName>
        <fullName evidence="1">Lysyl-tRNA synthetase</fullName>
        <shortName evidence="1">LysRS</shortName>
    </alternativeName>
</protein>